<gene>
    <name type="primary">yycE</name>
    <name type="ordered locus">BSU40430</name>
</gene>
<reference key="1">
    <citation type="journal article" date="1992" name="J. Bacteriol.">
        <title>Cloning and sequence of Bacillus subtilis purA and guaA, involved in the conversion of IMP to AMP and GMP.</title>
        <authorList>
            <person name="Maentsaelae P."/>
            <person name="Zalkin H."/>
        </authorList>
    </citation>
    <scope>NUCLEOTIDE SEQUENCE [GENOMIC DNA]</scope>
    <source>
        <strain>168 / DE1</strain>
    </source>
</reference>
<reference key="2">
    <citation type="journal article" date="1994" name="DNA Res.">
        <title>Systematic sequencing of the 180 kilobase region of the Bacillus subtilis chromosome containing the replication origin.</title>
        <authorList>
            <person name="Ogasawara N."/>
            <person name="Nakai S."/>
            <person name="Yoshikawa H."/>
        </authorList>
    </citation>
    <scope>NUCLEOTIDE SEQUENCE [GENOMIC DNA]</scope>
    <source>
        <strain>168</strain>
    </source>
</reference>
<reference key="3">
    <citation type="journal article" date="1997" name="Nature">
        <title>The complete genome sequence of the Gram-positive bacterium Bacillus subtilis.</title>
        <authorList>
            <person name="Kunst F."/>
            <person name="Ogasawara N."/>
            <person name="Moszer I."/>
            <person name="Albertini A.M."/>
            <person name="Alloni G."/>
            <person name="Azevedo V."/>
            <person name="Bertero M.G."/>
            <person name="Bessieres P."/>
            <person name="Bolotin A."/>
            <person name="Borchert S."/>
            <person name="Borriss R."/>
            <person name="Boursier L."/>
            <person name="Brans A."/>
            <person name="Braun M."/>
            <person name="Brignell S.C."/>
            <person name="Bron S."/>
            <person name="Brouillet S."/>
            <person name="Bruschi C.V."/>
            <person name="Caldwell B."/>
            <person name="Capuano V."/>
            <person name="Carter N.M."/>
            <person name="Choi S.-K."/>
            <person name="Codani J.-J."/>
            <person name="Connerton I.F."/>
            <person name="Cummings N.J."/>
            <person name="Daniel R.A."/>
            <person name="Denizot F."/>
            <person name="Devine K.M."/>
            <person name="Duesterhoeft A."/>
            <person name="Ehrlich S.D."/>
            <person name="Emmerson P.T."/>
            <person name="Entian K.-D."/>
            <person name="Errington J."/>
            <person name="Fabret C."/>
            <person name="Ferrari E."/>
            <person name="Foulger D."/>
            <person name="Fritz C."/>
            <person name="Fujita M."/>
            <person name="Fujita Y."/>
            <person name="Fuma S."/>
            <person name="Galizzi A."/>
            <person name="Galleron N."/>
            <person name="Ghim S.-Y."/>
            <person name="Glaser P."/>
            <person name="Goffeau A."/>
            <person name="Golightly E.J."/>
            <person name="Grandi G."/>
            <person name="Guiseppi G."/>
            <person name="Guy B.J."/>
            <person name="Haga K."/>
            <person name="Haiech J."/>
            <person name="Harwood C.R."/>
            <person name="Henaut A."/>
            <person name="Hilbert H."/>
            <person name="Holsappel S."/>
            <person name="Hosono S."/>
            <person name="Hullo M.-F."/>
            <person name="Itaya M."/>
            <person name="Jones L.-M."/>
            <person name="Joris B."/>
            <person name="Karamata D."/>
            <person name="Kasahara Y."/>
            <person name="Klaerr-Blanchard M."/>
            <person name="Klein C."/>
            <person name="Kobayashi Y."/>
            <person name="Koetter P."/>
            <person name="Koningstein G."/>
            <person name="Krogh S."/>
            <person name="Kumano M."/>
            <person name="Kurita K."/>
            <person name="Lapidus A."/>
            <person name="Lardinois S."/>
            <person name="Lauber J."/>
            <person name="Lazarevic V."/>
            <person name="Lee S.-M."/>
            <person name="Levine A."/>
            <person name="Liu H."/>
            <person name="Masuda S."/>
            <person name="Mauel C."/>
            <person name="Medigue C."/>
            <person name="Medina N."/>
            <person name="Mellado R.P."/>
            <person name="Mizuno M."/>
            <person name="Moestl D."/>
            <person name="Nakai S."/>
            <person name="Noback M."/>
            <person name="Noone D."/>
            <person name="O'Reilly M."/>
            <person name="Ogawa K."/>
            <person name="Ogiwara A."/>
            <person name="Oudega B."/>
            <person name="Park S.-H."/>
            <person name="Parro V."/>
            <person name="Pohl T.M."/>
            <person name="Portetelle D."/>
            <person name="Porwollik S."/>
            <person name="Prescott A.M."/>
            <person name="Presecan E."/>
            <person name="Pujic P."/>
            <person name="Purnelle B."/>
            <person name="Rapoport G."/>
            <person name="Rey M."/>
            <person name="Reynolds S."/>
            <person name="Rieger M."/>
            <person name="Rivolta C."/>
            <person name="Rocha E."/>
            <person name="Roche B."/>
            <person name="Rose M."/>
            <person name="Sadaie Y."/>
            <person name="Sato T."/>
            <person name="Scanlan E."/>
            <person name="Schleich S."/>
            <person name="Schroeter R."/>
            <person name="Scoffone F."/>
            <person name="Sekiguchi J."/>
            <person name="Sekowska A."/>
            <person name="Seror S.J."/>
            <person name="Serror P."/>
            <person name="Shin B.-S."/>
            <person name="Soldo B."/>
            <person name="Sorokin A."/>
            <person name="Tacconi E."/>
            <person name="Takagi T."/>
            <person name="Takahashi H."/>
            <person name="Takemaru K."/>
            <person name="Takeuchi M."/>
            <person name="Tamakoshi A."/>
            <person name="Tanaka T."/>
            <person name="Terpstra P."/>
            <person name="Tognoni A."/>
            <person name="Tosato V."/>
            <person name="Uchiyama S."/>
            <person name="Vandenbol M."/>
            <person name="Vannier F."/>
            <person name="Vassarotti A."/>
            <person name="Viari A."/>
            <person name="Wambutt R."/>
            <person name="Wedler E."/>
            <person name="Wedler H."/>
            <person name="Weitzenegger T."/>
            <person name="Winters P."/>
            <person name="Wipat A."/>
            <person name="Yamamoto H."/>
            <person name="Yamane K."/>
            <person name="Yasumoto K."/>
            <person name="Yata K."/>
            <person name="Yoshida K."/>
            <person name="Yoshikawa H.-F."/>
            <person name="Zumstein E."/>
            <person name="Yoshikawa H."/>
            <person name="Danchin A."/>
        </authorList>
    </citation>
    <scope>NUCLEOTIDE SEQUENCE [LARGE SCALE GENOMIC DNA]</scope>
    <source>
        <strain>168</strain>
    </source>
</reference>
<reference key="4">
    <citation type="submission" date="2005-01" db="PDB data bank">
        <title>2.0 A crystal structure of a hypothetical protein yycE from Bacillus subtilis.</title>
        <authorList>
            <consortium name="Midwest center for structural genomics (MCSG)"/>
        </authorList>
    </citation>
    <scope>X-RAY CRYSTALLOGRAPHY (2.0 ANGSTROMS)</scope>
</reference>
<name>YYCE_BACSU</name>
<protein>
    <recommendedName>
        <fullName>Uncharacterized protein YycE</fullName>
    </recommendedName>
</protein>
<dbReference type="EMBL" id="M83690">
    <property type="status" value="NOT_ANNOTATED_CDS"/>
    <property type="molecule type" value="Genomic_DNA"/>
</dbReference>
<dbReference type="EMBL" id="D26185">
    <property type="protein sequence ID" value="BAA05175.1"/>
    <property type="molecule type" value="Genomic_DNA"/>
</dbReference>
<dbReference type="EMBL" id="AL009126">
    <property type="protein sequence ID" value="CAB16080.1"/>
    <property type="molecule type" value="Genomic_DNA"/>
</dbReference>
<dbReference type="PIR" id="S65969">
    <property type="entry name" value="S65969"/>
</dbReference>
<dbReference type="RefSeq" id="NP_391923.1">
    <property type="nucleotide sequence ID" value="NC_000964.3"/>
</dbReference>
<dbReference type="RefSeq" id="WP_003243491.1">
    <property type="nucleotide sequence ID" value="NZ_OZ025638.1"/>
</dbReference>
<dbReference type="PDB" id="1TWU">
    <property type="method" value="X-ray"/>
    <property type="resolution" value="2.00 A"/>
    <property type="chains" value="A=1-139"/>
</dbReference>
<dbReference type="PDBsum" id="1TWU"/>
<dbReference type="SMR" id="P37479"/>
<dbReference type="FunCoup" id="P37479">
    <property type="interactions" value="47"/>
</dbReference>
<dbReference type="STRING" id="224308.BSU40430"/>
<dbReference type="PaxDb" id="224308-BSU40430"/>
<dbReference type="DNASU" id="937806"/>
<dbReference type="EnsemblBacteria" id="CAB16080">
    <property type="protein sequence ID" value="CAB16080"/>
    <property type="gene ID" value="BSU_40430"/>
</dbReference>
<dbReference type="GeneID" id="937806"/>
<dbReference type="KEGG" id="bsu:BSU40430"/>
<dbReference type="PATRIC" id="fig|224308.179.peg.4376"/>
<dbReference type="eggNOG" id="COG0346">
    <property type="taxonomic scope" value="Bacteria"/>
</dbReference>
<dbReference type="InParanoid" id="P37479"/>
<dbReference type="OrthoDB" id="8018325at2"/>
<dbReference type="BioCyc" id="BSUB:BSU40430-MONOMER"/>
<dbReference type="EvolutionaryTrace" id="P37479"/>
<dbReference type="Proteomes" id="UP000001570">
    <property type="component" value="Chromosome"/>
</dbReference>
<dbReference type="CDD" id="cd06587">
    <property type="entry name" value="VOC"/>
    <property type="match status" value="1"/>
</dbReference>
<dbReference type="Gene3D" id="3.10.180.10">
    <property type="entry name" value="2,3-Dihydroxybiphenyl 1,2-Dioxygenase, domain 1"/>
    <property type="match status" value="1"/>
</dbReference>
<dbReference type="InterPro" id="IPR029068">
    <property type="entry name" value="Glyas_Bleomycin-R_OHBP_Dase"/>
</dbReference>
<dbReference type="InterPro" id="IPR037523">
    <property type="entry name" value="VOC"/>
</dbReference>
<dbReference type="Pfam" id="PF22659">
    <property type="entry name" value="YycE-like_C"/>
    <property type="match status" value="1"/>
</dbReference>
<dbReference type="Pfam" id="PF22658">
    <property type="entry name" value="YycE-like_N"/>
    <property type="match status" value="1"/>
</dbReference>
<dbReference type="SUPFAM" id="SSF54593">
    <property type="entry name" value="Glyoxalase/Bleomycin resistance protein/Dihydroxybiphenyl dioxygenase"/>
    <property type="match status" value="1"/>
</dbReference>
<dbReference type="PROSITE" id="PS51819">
    <property type="entry name" value="VOC"/>
    <property type="match status" value="1"/>
</dbReference>
<accession>P37479</accession>
<evidence type="ECO:0000255" key="1">
    <source>
        <dbReference type="PROSITE-ProRule" id="PRU01163"/>
    </source>
</evidence>
<evidence type="ECO:0007829" key="2">
    <source>
        <dbReference type="PDB" id="1TWU"/>
    </source>
</evidence>
<sequence length="139" mass="15588">MGKRFSSFQAAQIRIARPTGQLDEIIRFYEEGLCLKRIGEFSQHNGYDGVMFGLPHADYHLEFTQYEGGSTAPVPHPDSLLVFYVPNAVELAAITSKLKHMGYQEVESENPYWSNGGVTIEDPDGWRIVFMNSKGISGK</sequence>
<organism>
    <name type="scientific">Bacillus subtilis (strain 168)</name>
    <dbReference type="NCBI Taxonomy" id="224308"/>
    <lineage>
        <taxon>Bacteria</taxon>
        <taxon>Bacillati</taxon>
        <taxon>Bacillota</taxon>
        <taxon>Bacilli</taxon>
        <taxon>Bacillales</taxon>
        <taxon>Bacillaceae</taxon>
        <taxon>Bacillus</taxon>
    </lineage>
</organism>
<feature type="chain" id="PRO_0000050074" description="Uncharacterized protein YycE">
    <location>
        <begin position="1"/>
        <end position="139"/>
    </location>
</feature>
<feature type="domain" description="VOC" evidence="1">
    <location>
        <begin position="9"/>
        <end position="133"/>
    </location>
</feature>
<feature type="strand" evidence="2">
    <location>
        <begin position="13"/>
        <end position="18"/>
    </location>
</feature>
<feature type="helix" evidence="2">
    <location>
        <begin position="22"/>
        <end position="29"/>
    </location>
</feature>
<feature type="turn" evidence="2">
    <location>
        <begin position="30"/>
        <end position="32"/>
    </location>
</feature>
<feature type="strand" evidence="2">
    <location>
        <begin position="37"/>
        <end position="44"/>
    </location>
</feature>
<feature type="strand" evidence="2">
    <location>
        <begin position="47"/>
        <end position="66"/>
    </location>
</feature>
<feature type="strand" evidence="2">
    <location>
        <begin position="80"/>
        <end position="84"/>
    </location>
</feature>
<feature type="helix" evidence="2">
    <location>
        <begin position="88"/>
        <end position="100"/>
    </location>
</feature>
<feature type="helix" evidence="2">
    <location>
        <begin position="111"/>
        <end position="114"/>
    </location>
</feature>
<feature type="strand" evidence="2">
    <location>
        <begin position="115"/>
        <end position="121"/>
    </location>
</feature>
<feature type="strand" evidence="2">
    <location>
        <begin position="127"/>
        <end position="133"/>
    </location>
</feature>
<keyword id="KW-0002">3D-structure</keyword>
<keyword id="KW-1185">Reference proteome</keyword>
<proteinExistence type="evidence at protein level"/>